<dbReference type="EC" id="3.1.-.-"/>
<dbReference type="EMBL" id="CP000113">
    <property type="protein sequence ID" value="ABF87577.1"/>
    <property type="molecule type" value="Genomic_DNA"/>
</dbReference>
<dbReference type="RefSeq" id="WP_011557184.1">
    <property type="nucleotide sequence ID" value="NC_008095.1"/>
</dbReference>
<dbReference type="SMR" id="Q1CW45"/>
<dbReference type="STRING" id="246197.MXAN_7265"/>
<dbReference type="EnsemblBacteria" id="ABF87577">
    <property type="protein sequence ID" value="ABF87577"/>
    <property type="gene ID" value="MXAN_7265"/>
</dbReference>
<dbReference type="GeneID" id="41364431"/>
<dbReference type="KEGG" id="mxa:MXAN_7265"/>
<dbReference type="eggNOG" id="ENOG502Z8Q5">
    <property type="taxonomic scope" value="Bacteria"/>
</dbReference>
<dbReference type="HOGENOM" id="CLU_096068_1_0_7"/>
<dbReference type="OrthoDB" id="9779370at2"/>
<dbReference type="Proteomes" id="UP000002402">
    <property type="component" value="Chromosome"/>
</dbReference>
<dbReference type="GO" id="GO:0004519">
    <property type="term" value="F:endonuclease activity"/>
    <property type="evidence" value="ECO:0007669"/>
    <property type="project" value="UniProtKB-KW"/>
</dbReference>
<dbReference type="GO" id="GO:0003723">
    <property type="term" value="F:RNA binding"/>
    <property type="evidence" value="ECO:0007669"/>
    <property type="project" value="UniProtKB-KW"/>
</dbReference>
<dbReference type="GO" id="GO:0051607">
    <property type="term" value="P:defense response to virus"/>
    <property type="evidence" value="ECO:0007669"/>
    <property type="project" value="UniProtKB-KW"/>
</dbReference>
<dbReference type="CDD" id="cd09703">
    <property type="entry name" value="Cas6-I-III"/>
    <property type="match status" value="1"/>
</dbReference>
<dbReference type="InterPro" id="IPR014174">
    <property type="entry name" value="CRISPR-assoc_prot_Cas6/Cmx6"/>
</dbReference>
<dbReference type="NCBIfam" id="TIGR02807">
    <property type="entry name" value="cas6_cmx6"/>
    <property type="match status" value="1"/>
</dbReference>
<dbReference type="Pfam" id="PF09559">
    <property type="entry name" value="Cas6"/>
    <property type="match status" value="1"/>
</dbReference>
<name>CAS6_MYXXD</name>
<comment type="function">
    <text evidence="1">CRISPR (clustered regularly interspaced short palindromic repeat) is an adaptive immune system that provides protection against mobile genetic elements (viruses, transposable elements and conjugative plasmids). CRISPR clusters contain sequences complementary to antecedent mobile elements and target invading nucleic acids. CRISPR clusters are transcribed and processed into CRISPR RNA (crRNA). Processes pre-crRNA into individual crRNA units (By similarity).</text>
</comment>
<comment type="developmental stage">
    <text>Operon expression begins by 6 hours after starvation has initiated development and is under strong negative regulation by DevS.</text>
</comment>
<comment type="induction">
    <text evidence="2">Part of an operon going from at least MXAN_7266 to MXAN_7259 that includes a CRISPR operon with transcription continuing into the pre-crRNA locus.</text>
</comment>
<comment type="similarity">
    <text evidence="3">Belongs to the CRISPR-associated protein Cas6/Cse3/CasE family. Subtype Myxan subfamily.</text>
</comment>
<evidence type="ECO:0000250" key="1"/>
<evidence type="ECO:0000269" key="2">
    <source>
    </source>
</evidence>
<evidence type="ECO:0000305" key="3"/>
<accession>Q1CW45</accession>
<keyword id="KW-0051">Antiviral defense</keyword>
<keyword id="KW-0255">Endonuclease</keyword>
<keyword id="KW-0378">Hydrolase</keyword>
<keyword id="KW-0540">Nuclease</keyword>
<keyword id="KW-1185">Reference proteome</keyword>
<keyword id="KW-0694">RNA-binding</keyword>
<sequence>MARSVGWRRSALITVSGCVILNWWGNLMVFVDLLFPVQGGPVPLDHAYLLFSALSRHLPALHERSDMGVFSLRGVSNTRELLYLGRGTMRLRCPIEAVATLLPLVSAPLEIAGRRLSLGAPSLHALEPVPSLFARLVTFKHAMDEAAFVAAASRALEALGVQATLKVGRRRIVRITGKKVVGFALELHGLSAEHSLRVQEQGMGGRRHMGCGLFLPPGRAARVQSHGKAA</sequence>
<organism>
    <name type="scientific">Myxococcus xanthus (strain DK1622)</name>
    <dbReference type="NCBI Taxonomy" id="246197"/>
    <lineage>
        <taxon>Bacteria</taxon>
        <taxon>Pseudomonadati</taxon>
        <taxon>Myxococcota</taxon>
        <taxon>Myxococcia</taxon>
        <taxon>Myxococcales</taxon>
        <taxon>Cystobacterineae</taxon>
        <taxon>Myxococcaceae</taxon>
        <taxon>Myxococcus</taxon>
    </lineage>
</organism>
<protein>
    <recommendedName>
        <fullName>CRISPR-associated endonuclease Cas6</fullName>
        <ecNumber>3.1.-.-</ecNumber>
    </recommendedName>
</protein>
<reference key="1">
    <citation type="journal article" date="2006" name="Proc. Natl. Acad. Sci. U.S.A.">
        <title>Evolution of sensory complexity recorded in a myxobacterial genome.</title>
        <authorList>
            <person name="Goldman B.S."/>
            <person name="Nierman W.C."/>
            <person name="Kaiser D."/>
            <person name="Slater S.C."/>
            <person name="Durkin A.S."/>
            <person name="Eisen J.A."/>
            <person name="Ronning C.M."/>
            <person name="Barbazuk W.B."/>
            <person name="Blanchard M."/>
            <person name="Field C."/>
            <person name="Halling C."/>
            <person name="Hinkle G."/>
            <person name="Iartchuk O."/>
            <person name="Kim H.S."/>
            <person name="Mackenzie C."/>
            <person name="Madupu R."/>
            <person name="Miller N."/>
            <person name="Shvartsbeyn A."/>
            <person name="Sullivan S.A."/>
            <person name="Vaudin M."/>
            <person name="Wiegand R."/>
            <person name="Kaplan H.B."/>
        </authorList>
    </citation>
    <scope>NUCLEOTIDE SEQUENCE [LARGE SCALE GENOMIC DNA]</scope>
    <source>
        <strain>DK1622</strain>
    </source>
</reference>
<reference key="2">
    <citation type="journal article" date="2007" name="J. Bacteriol.">
        <title>Regulation of dev, an operon that includes genes essential for Myxococcus xanthus development and CRISPR-associated genes and repeats.</title>
        <authorList>
            <person name="Viswanathan P."/>
            <person name="Murphy K."/>
            <person name="Julien B."/>
            <person name="Garza A.G."/>
            <person name="Kroos L."/>
        </authorList>
    </citation>
    <scope>INDUCTION</scope>
    <scope>OPERON STRUCTURE</scope>
    <source>
        <strain>DK1622</strain>
    </source>
</reference>
<gene>
    <name type="primary">cas6</name>
    <name type="ordered locus">MXAN_7265</name>
</gene>
<feature type="chain" id="PRO_0000418223" description="CRISPR-associated endonuclease Cas6">
    <location>
        <begin position="1"/>
        <end position="230"/>
    </location>
</feature>
<proteinExistence type="evidence at transcript level"/>